<accession>A3LWM9</accession>
<evidence type="ECO:0000255" key="1">
    <source>
        <dbReference type="HAMAP-Rule" id="MF_03109"/>
    </source>
</evidence>
<evidence type="ECO:0000255" key="2">
    <source>
        <dbReference type="PROSITE-ProRule" id="PRU01052"/>
    </source>
</evidence>
<evidence type="ECO:0000256" key="3">
    <source>
        <dbReference type="SAM" id="MobiDB-lite"/>
    </source>
</evidence>
<organism>
    <name type="scientific">Scheffersomyces stipitis (strain ATCC 58785 / CBS 6054 / NBRC 10063 / NRRL Y-11545)</name>
    <name type="common">Yeast</name>
    <name type="synonym">Pichia stipitis</name>
    <dbReference type="NCBI Taxonomy" id="322104"/>
    <lineage>
        <taxon>Eukaryota</taxon>
        <taxon>Fungi</taxon>
        <taxon>Dikarya</taxon>
        <taxon>Ascomycota</taxon>
        <taxon>Saccharomycotina</taxon>
        <taxon>Pichiomycetes</taxon>
        <taxon>Debaryomycetaceae</taxon>
        <taxon>Scheffersomyces</taxon>
    </lineage>
</organism>
<gene>
    <name evidence="1" type="primary">SEY1</name>
    <name type="ORF">PICST_84922</name>
</gene>
<proteinExistence type="inferred from homology"/>
<sequence length="827" mass="95440">MSQSSPSNAETDEDLSTTSSSSSFVPIEQHQIQDAIQVIDENKEFNKNILPYVVKTTPISSVGNNYHIISVFGSQSTGKSTLLNRLFNTNFDVMDESRRQQTTKGIWMAHSPQVSTTKQMDTHQENIFVMDVEGTDGRERGEDQDFERKAALFALATSEILIVNIWETQIGLYQGANMGLLKTVFEVNLTLFGKSKLEKNDHKVLLLIVIRDHVGLTPKENLSSTITQDLLKIWESLNKPAELAHLQFEDFFDTDFHTLRHKVLQPKEFLEDVNELGDRLVVKKDLFRPNYHHNIPIDGWTMYAENCWQQIDSNKDLDLPTQQILVAKFKCDEISASVYEEFHQKFKAISSANTPGISTLDYQDLGLLLVDLRSDTLENYDLSASRYTKSVYEQRKDLLKEKLNEKFREFFDAHIKHLSEKSVKEFETNIVGLKGKNFDKEATRLTRETTDYFINSAILLSLENELDYDVHVSNLQDQLTKLIQQQQLVELKNIVNKSIKKLSSGLTKAVSFELADPTETSWNNILSKFKEFVLDFLSKNELEEEAGTYDFGLGTNRAQNKEAVETFKFKSWNAFYEIIHKIISKDNLLTLLKDRFDDKFRYDENGLPRMYQNTVELETNFGISKSFALRIVPLLTIAKLNDNSEILPDYDIFDSKLRAKYLGLVENEHDSEDEEDEEDRCFAEIISESEKAEVLNKFKKETDARFIETKRSIVQHVTQIPYYIYLVIMVLGWNEFMAIVRNPLFFSLVLVFGAGLYILYSMNLLKPAMVVVQRLIDEIIAMAKEKMREFLIDDHPTQAHNLQKISASNREKVEEEKVVETIEMQDL</sequence>
<keyword id="KW-0175">Coiled coil</keyword>
<keyword id="KW-0256">Endoplasmic reticulum</keyword>
<keyword id="KW-0342">GTP-binding</keyword>
<keyword id="KW-0378">Hydrolase</keyword>
<keyword id="KW-0472">Membrane</keyword>
<keyword id="KW-0547">Nucleotide-binding</keyword>
<keyword id="KW-1185">Reference proteome</keyword>
<keyword id="KW-0812">Transmembrane</keyword>
<keyword id="KW-1133">Transmembrane helix</keyword>
<comment type="function">
    <text evidence="1">Cooperates with the reticulon proteins and tubule-shaping DP1 family proteins to generate and maintain the structure of the tubular endoplasmic reticulum network. Has GTPase activity, which is required for its function in ER organization.</text>
</comment>
<comment type="subcellular location">
    <subcellularLocation>
        <location evidence="1">Endoplasmic reticulum membrane</location>
        <topology evidence="1">Multi-pass membrane protein</topology>
    </subcellularLocation>
    <text evidence="1">Enriched in the cortical ER. Concentrated in punctae along the ER tubules.</text>
</comment>
<comment type="similarity">
    <text evidence="2">Belongs to the TRAFAC class dynamin-like GTPase superfamily. GB1/RHD3 GTPase family. RHD3 subfamily.</text>
</comment>
<dbReference type="EC" id="3.6.5.-" evidence="1"/>
<dbReference type="EMBL" id="CP000500">
    <property type="protein sequence ID" value="ABN67661.2"/>
    <property type="molecule type" value="Genomic_DNA"/>
</dbReference>
<dbReference type="RefSeq" id="XP_001385690.2">
    <property type="nucleotide sequence ID" value="XM_001385653.1"/>
</dbReference>
<dbReference type="SMR" id="A3LWM9"/>
<dbReference type="FunCoup" id="A3LWM9">
    <property type="interactions" value="60"/>
</dbReference>
<dbReference type="STRING" id="322104.A3LWM9"/>
<dbReference type="GeneID" id="4839766"/>
<dbReference type="KEGG" id="pic:PICST_84922"/>
<dbReference type="eggNOG" id="KOG2203">
    <property type="taxonomic scope" value="Eukaryota"/>
</dbReference>
<dbReference type="HOGENOM" id="CLU_011270_0_0_1"/>
<dbReference type="InParanoid" id="A3LWM9"/>
<dbReference type="OMA" id="PIIKMTE"/>
<dbReference type="OrthoDB" id="1597724at2759"/>
<dbReference type="Proteomes" id="UP000002258">
    <property type="component" value="Chromosome 6"/>
</dbReference>
<dbReference type="GO" id="GO:0032541">
    <property type="term" value="C:cortical endoplasmic reticulum"/>
    <property type="evidence" value="ECO:0007669"/>
    <property type="project" value="EnsemblFungi"/>
</dbReference>
<dbReference type="GO" id="GO:0005789">
    <property type="term" value="C:endoplasmic reticulum membrane"/>
    <property type="evidence" value="ECO:0007669"/>
    <property type="project" value="UniProtKB-SubCell"/>
</dbReference>
<dbReference type="GO" id="GO:0005525">
    <property type="term" value="F:GTP binding"/>
    <property type="evidence" value="ECO:0007669"/>
    <property type="project" value="UniProtKB-UniRule"/>
</dbReference>
<dbReference type="GO" id="GO:0003924">
    <property type="term" value="F:GTPase activity"/>
    <property type="evidence" value="ECO:0007669"/>
    <property type="project" value="UniProtKB-UniRule"/>
</dbReference>
<dbReference type="GO" id="GO:0048309">
    <property type="term" value="P:endoplasmic reticulum inheritance"/>
    <property type="evidence" value="ECO:0007669"/>
    <property type="project" value="EnsemblFungi"/>
</dbReference>
<dbReference type="GO" id="GO:0016320">
    <property type="term" value="P:endoplasmic reticulum membrane fusion"/>
    <property type="evidence" value="ECO:0007669"/>
    <property type="project" value="EnsemblFungi"/>
</dbReference>
<dbReference type="CDD" id="cd01851">
    <property type="entry name" value="GBP"/>
    <property type="match status" value="1"/>
</dbReference>
<dbReference type="FunFam" id="3.40.50.300:FF:000727">
    <property type="entry name" value="Protein SEY1 homolog"/>
    <property type="match status" value="1"/>
</dbReference>
<dbReference type="Gene3D" id="3.40.50.300">
    <property type="entry name" value="P-loop containing nucleotide triphosphate hydrolases"/>
    <property type="match status" value="1"/>
</dbReference>
<dbReference type="HAMAP" id="MF_03109">
    <property type="entry name" value="Sey1"/>
    <property type="match status" value="1"/>
</dbReference>
<dbReference type="InterPro" id="IPR030386">
    <property type="entry name" value="G_GB1_RHD3_dom"/>
</dbReference>
<dbReference type="InterPro" id="IPR027417">
    <property type="entry name" value="P-loop_NTPase"/>
</dbReference>
<dbReference type="InterPro" id="IPR008803">
    <property type="entry name" value="RHD3/Sey1"/>
</dbReference>
<dbReference type="InterPro" id="IPR046758">
    <property type="entry name" value="Sey1/RHD3-like_3HB"/>
</dbReference>
<dbReference type="PANTHER" id="PTHR45923">
    <property type="entry name" value="PROTEIN SEY1"/>
    <property type="match status" value="1"/>
</dbReference>
<dbReference type="PANTHER" id="PTHR45923:SF2">
    <property type="entry name" value="PROTEIN SEY1"/>
    <property type="match status" value="1"/>
</dbReference>
<dbReference type="Pfam" id="PF05879">
    <property type="entry name" value="RHD3_GTPase"/>
    <property type="match status" value="1"/>
</dbReference>
<dbReference type="Pfam" id="PF20428">
    <property type="entry name" value="Sey1_3HB"/>
    <property type="match status" value="1"/>
</dbReference>
<dbReference type="SUPFAM" id="SSF52540">
    <property type="entry name" value="P-loop containing nucleoside triphosphate hydrolases"/>
    <property type="match status" value="1"/>
</dbReference>
<dbReference type="PROSITE" id="PS51715">
    <property type="entry name" value="G_GB1_RHD3"/>
    <property type="match status" value="1"/>
</dbReference>
<feature type="chain" id="PRO_0000384997" description="Protein SEY1">
    <location>
        <begin position="1"/>
        <end position="827"/>
    </location>
</feature>
<feature type="topological domain" description="Cytoplasmic" evidence="1">
    <location>
        <begin position="1"/>
        <end position="719"/>
    </location>
</feature>
<feature type="transmembrane region" description="Helical" evidence="1">
    <location>
        <begin position="720"/>
        <end position="740"/>
    </location>
</feature>
<feature type="topological domain" description="Lumenal" evidence="1">
    <location>
        <begin position="741"/>
        <end position="743"/>
    </location>
</feature>
<feature type="transmembrane region" description="Helical" evidence="1">
    <location>
        <begin position="744"/>
        <end position="764"/>
    </location>
</feature>
<feature type="topological domain" description="Cytoplasmic" evidence="1">
    <location>
        <begin position="765"/>
        <end position="827"/>
    </location>
</feature>
<feature type="domain" description="GB1/RHD3-type G" evidence="2">
    <location>
        <begin position="63"/>
        <end position="291"/>
    </location>
</feature>
<feature type="region of interest" description="Disordered" evidence="3">
    <location>
        <begin position="1"/>
        <end position="26"/>
    </location>
</feature>
<feature type="coiled-coil region" evidence="1">
    <location>
        <begin position="389"/>
        <end position="409"/>
    </location>
</feature>
<feature type="coiled-coil region" evidence="1">
    <location>
        <begin position="472"/>
        <end position="492"/>
    </location>
</feature>
<feature type="coiled-coil region" evidence="1">
    <location>
        <begin position="803"/>
        <end position="823"/>
    </location>
</feature>
<feature type="binding site" evidence="1">
    <location>
        <begin position="73"/>
        <end position="80"/>
    </location>
    <ligand>
        <name>GTP</name>
        <dbReference type="ChEBI" id="CHEBI:37565"/>
    </ligand>
</feature>
<protein>
    <recommendedName>
        <fullName evidence="1">Protein SEY1</fullName>
        <ecNumber evidence="1">3.6.5.-</ecNumber>
    </recommendedName>
</protein>
<reference key="1">
    <citation type="journal article" date="2007" name="Nat. Biotechnol.">
        <title>Genome sequence of the lignocellulose-bioconverting and xylose-fermenting yeast Pichia stipitis.</title>
        <authorList>
            <person name="Jeffries T.W."/>
            <person name="Grigoriev I.V."/>
            <person name="Grimwood J."/>
            <person name="Laplaza J.M."/>
            <person name="Aerts A."/>
            <person name="Salamov A."/>
            <person name="Schmutz J."/>
            <person name="Lindquist E."/>
            <person name="Dehal P."/>
            <person name="Shapiro H."/>
            <person name="Jin Y.-S."/>
            <person name="Passoth V."/>
            <person name="Richardson P.M."/>
        </authorList>
    </citation>
    <scope>NUCLEOTIDE SEQUENCE [LARGE SCALE GENOMIC DNA]</scope>
    <source>
        <strain>ATCC 58785 / CBS 6054 / NBRC 10063 / NRRL Y-11545</strain>
    </source>
</reference>
<name>SEY1_PICST</name>